<protein>
    <recommendedName>
        <fullName evidence="1">Phosphoenolpyruvate guanylyltransferase</fullName>
        <shortName evidence="1">PEP guanylyltransferase</shortName>
        <ecNumber evidence="1">2.7.7.105</ecNumber>
    </recommendedName>
    <alternativeName>
        <fullName>2-phospho-L-lactate guanylyltransferase</fullName>
    </alternativeName>
</protein>
<feature type="chain" id="PRO_0000398695" description="Phosphoenolpyruvate guanylyltransferase">
    <location>
        <begin position="1"/>
        <end position="221"/>
    </location>
</feature>
<feature type="binding site" evidence="1">
    <location>
        <position position="154"/>
    </location>
    <ligand>
        <name>phosphoenolpyruvate</name>
        <dbReference type="ChEBI" id="CHEBI:58702"/>
    </ligand>
</feature>
<feature type="binding site" evidence="1">
    <location>
        <position position="169"/>
    </location>
    <ligand>
        <name>phosphoenolpyruvate</name>
        <dbReference type="ChEBI" id="CHEBI:58702"/>
    </ligand>
</feature>
<feature type="binding site" evidence="1">
    <location>
        <position position="172"/>
    </location>
    <ligand>
        <name>phosphoenolpyruvate</name>
        <dbReference type="ChEBI" id="CHEBI:58702"/>
    </ligand>
</feature>
<evidence type="ECO:0000255" key="1">
    <source>
        <dbReference type="HAMAP-Rule" id="MF_02114"/>
    </source>
</evidence>
<evidence type="ECO:0000269" key="2">
    <source>
    </source>
</evidence>
<keyword id="KW-0342">GTP-binding</keyword>
<keyword id="KW-0547">Nucleotide-binding</keyword>
<keyword id="KW-0548">Nucleotidyltransferase</keyword>
<keyword id="KW-1185">Reference proteome</keyword>
<keyword id="KW-0808">Transferase</keyword>
<gene>
    <name evidence="1" type="primary">fbiD</name>
    <name type="ordered locus">MSMEG_2392</name>
    <name type="ordered locus">MSMEI_2332</name>
</gene>
<proteinExistence type="evidence at protein level"/>
<reference key="1">
    <citation type="submission" date="2006-10" db="EMBL/GenBank/DDBJ databases">
        <authorList>
            <person name="Fleischmann R.D."/>
            <person name="Dodson R.J."/>
            <person name="Haft D.H."/>
            <person name="Merkel J.S."/>
            <person name="Nelson W.C."/>
            <person name="Fraser C.M."/>
        </authorList>
    </citation>
    <scope>NUCLEOTIDE SEQUENCE [LARGE SCALE GENOMIC DNA]</scope>
    <source>
        <strain>ATCC 700084 / mc(2)155</strain>
    </source>
</reference>
<reference key="2">
    <citation type="journal article" date="2007" name="Genome Biol.">
        <title>Interrupted coding sequences in Mycobacterium smegmatis: authentic mutations or sequencing errors?</title>
        <authorList>
            <person name="Deshayes C."/>
            <person name="Perrodou E."/>
            <person name="Gallien S."/>
            <person name="Euphrasie D."/>
            <person name="Schaeffer C."/>
            <person name="Van-Dorsselaer A."/>
            <person name="Poch O."/>
            <person name="Lecompte O."/>
            <person name="Reyrat J.-M."/>
        </authorList>
    </citation>
    <scope>NUCLEOTIDE SEQUENCE [LARGE SCALE GENOMIC DNA]</scope>
    <source>
        <strain>ATCC 700084 / mc(2)155</strain>
    </source>
</reference>
<reference key="3">
    <citation type="journal article" date="2009" name="Genome Res.">
        <title>Ortho-proteogenomics: multiple proteomes investigation through orthology and a new MS-based protocol.</title>
        <authorList>
            <person name="Gallien S."/>
            <person name="Perrodou E."/>
            <person name="Carapito C."/>
            <person name="Deshayes C."/>
            <person name="Reyrat J.-M."/>
            <person name="Van Dorsselaer A."/>
            <person name="Poch O."/>
            <person name="Schaeffer C."/>
            <person name="Lecompte O."/>
        </authorList>
    </citation>
    <scope>NUCLEOTIDE SEQUENCE [LARGE SCALE GENOMIC DNA]</scope>
    <source>
        <strain>ATCC 700084 / mc(2)155</strain>
    </source>
</reference>
<reference key="4">
    <citation type="journal article" date="2007" name="Microbiology">
        <title>Mycobacterium smegmatis mc2 155 fbiC and MSMEG_2392 are involved in triphenylmethane dye decolorization and coenzyme F420 biosynthesis.</title>
        <authorList>
            <person name="Guerra-Lopez D."/>
            <person name="Daniels L."/>
            <person name="Rawat M."/>
        </authorList>
    </citation>
    <scope>FUNCTION IN F420 BIOSYNTHESIS</scope>
    <scope>DISRUPTION PHENOTYPE</scope>
</reference>
<dbReference type="EC" id="2.7.7.105" evidence="1"/>
<dbReference type="EMBL" id="CP000480">
    <property type="protein sequence ID" value="ABK73289.1"/>
    <property type="molecule type" value="Genomic_DNA"/>
</dbReference>
<dbReference type="EMBL" id="CP001663">
    <property type="protein sequence ID" value="AFP38800.1"/>
    <property type="molecule type" value="Genomic_DNA"/>
</dbReference>
<dbReference type="RefSeq" id="YP_886732.1">
    <property type="nucleotide sequence ID" value="NC_008596.1"/>
</dbReference>
<dbReference type="SMR" id="A0QUZ4"/>
<dbReference type="STRING" id="246196.MSMEG_2392"/>
<dbReference type="PaxDb" id="246196-MSMEI_2332"/>
<dbReference type="KEGG" id="msb:LJ00_11895"/>
<dbReference type="KEGG" id="msg:MSMEI_2332"/>
<dbReference type="KEGG" id="msm:MSMEG_2392"/>
<dbReference type="PATRIC" id="fig|246196.19.peg.2356"/>
<dbReference type="eggNOG" id="COG1920">
    <property type="taxonomic scope" value="Bacteria"/>
</dbReference>
<dbReference type="OrthoDB" id="9151145at2"/>
<dbReference type="BRENDA" id="1.3.8.17">
    <property type="organism ID" value="3512"/>
</dbReference>
<dbReference type="BRENDA" id="2.7.7.105">
    <property type="organism ID" value="3512"/>
</dbReference>
<dbReference type="UniPathway" id="UPA00071"/>
<dbReference type="Proteomes" id="UP000000757">
    <property type="component" value="Chromosome"/>
</dbReference>
<dbReference type="Proteomes" id="UP000006158">
    <property type="component" value="Chromosome"/>
</dbReference>
<dbReference type="GO" id="GO:0005525">
    <property type="term" value="F:GTP binding"/>
    <property type="evidence" value="ECO:0007669"/>
    <property type="project" value="UniProtKB-KW"/>
</dbReference>
<dbReference type="GO" id="GO:0043814">
    <property type="term" value="F:phospholactate guanylyltransferase activity"/>
    <property type="evidence" value="ECO:0007669"/>
    <property type="project" value="InterPro"/>
</dbReference>
<dbReference type="GO" id="GO:0052645">
    <property type="term" value="P:F420-0 metabolic process"/>
    <property type="evidence" value="ECO:0007669"/>
    <property type="project" value="UniProtKB-UniRule"/>
</dbReference>
<dbReference type="Gene3D" id="3.90.550.10">
    <property type="entry name" value="Spore Coat Polysaccharide Biosynthesis Protein SpsA, Chain A"/>
    <property type="match status" value="1"/>
</dbReference>
<dbReference type="HAMAP" id="MF_02114">
    <property type="entry name" value="CofC"/>
    <property type="match status" value="1"/>
</dbReference>
<dbReference type="InterPro" id="IPR002835">
    <property type="entry name" value="CofC"/>
</dbReference>
<dbReference type="InterPro" id="IPR029044">
    <property type="entry name" value="Nucleotide-diphossugar_trans"/>
</dbReference>
<dbReference type="NCBIfam" id="TIGR03552">
    <property type="entry name" value="F420_cofC"/>
    <property type="match status" value="1"/>
</dbReference>
<dbReference type="PANTHER" id="PTHR40392">
    <property type="entry name" value="2-PHOSPHO-L-LACTATE GUANYLYLTRANSFERASE"/>
    <property type="match status" value="1"/>
</dbReference>
<dbReference type="PANTHER" id="PTHR40392:SF1">
    <property type="entry name" value="2-PHOSPHO-L-LACTATE GUANYLYLTRANSFERASE"/>
    <property type="match status" value="1"/>
</dbReference>
<dbReference type="Pfam" id="PF01983">
    <property type="entry name" value="CofC"/>
    <property type="match status" value="1"/>
</dbReference>
<dbReference type="SUPFAM" id="SSF53448">
    <property type="entry name" value="Nucleotide-diphospho-sugar transferases"/>
    <property type="match status" value="1"/>
</dbReference>
<accession>A0QUZ4</accession>
<accession>I7FB84</accession>
<name>FBID_MYCS2</name>
<sequence>MSGRRTPGAASDGSAGGQAAVIIAVKRLTAAKTRLAPIFSAATREEVVLAMLVDTITAASTVAPVTVVTPDEVAADAARQLGAGVLADPTPEGHHNPLNNAIMAAEEHLRAGTPNIVVLQGDLPAMQPRELAEALAAARTYPRSFVGDRHGTGTSALFAFGVPLQPRFGADSATHHRHSGAIELTGAWPGLRCDIDTAEDLRTARRLGVGPATAQAIAAHR</sequence>
<organism>
    <name type="scientific">Mycolicibacterium smegmatis (strain ATCC 700084 / mc(2)155)</name>
    <name type="common">Mycobacterium smegmatis</name>
    <dbReference type="NCBI Taxonomy" id="246196"/>
    <lineage>
        <taxon>Bacteria</taxon>
        <taxon>Bacillati</taxon>
        <taxon>Actinomycetota</taxon>
        <taxon>Actinomycetes</taxon>
        <taxon>Mycobacteriales</taxon>
        <taxon>Mycobacteriaceae</taxon>
        <taxon>Mycolicibacterium</taxon>
    </lineage>
</organism>
<comment type="function">
    <text evidence="1 2">Guanylyltransferase that catalyzes the activation of phosphoenolpyruvate (PEP) as enolpyruvoyl-2-diphospho-5'-guanosine, via the condensation of PEP with GTP. It is involved in the biosynthesis of coenzyme F420, a hydride carrier cofactor.</text>
</comment>
<comment type="catalytic activity">
    <reaction evidence="1">
        <text>phosphoenolpyruvate + GTP + H(+) = enolpyruvoyl-2-diphospho-5'-guanosine + diphosphate</text>
        <dbReference type="Rhea" id="RHEA:30519"/>
        <dbReference type="ChEBI" id="CHEBI:15378"/>
        <dbReference type="ChEBI" id="CHEBI:33019"/>
        <dbReference type="ChEBI" id="CHEBI:37565"/>
        <dbReference type="ChEBI" id="CHEBI:58702"/>
        <dbReference type="ChEBI" id="CHEBI:143701"/>
        <dbReference type="EC" id="2.7.7.105"/>
    </reaction>
</comment>
<comment type="pathway">
    <text evidence="1">Cofactor biosynthesis; coenzyme F420 biosynthesis.</text>
</comment>
<comment type="disruption phenotype">
    <text evidence="2">Cells lacking this gene accumulate 7,8-didemethyl-8-hydroxy-5-deazariboflavin (Fo) to five times the wild-type levels but do not produce F420. They are also unable to decolorize triphenylmethane dye, and are sensitive to oxidative stress caused by the redox-cycling agents plumbagin and menadione.</text>
</comment>
<comment type="similarity">
    <text evidence="1">Belongs to the CofC family.</text>
</comment>